<keyword id="KW-1185">Reference proteome</keyword>
<protein>
    <recommendedName>
        <fullName>Putative F-box protein L168</fullName>
    </recommendedName>
</protein>
<gene>
    <name type="ordered locus">MIMI_L168</name>
</gene>
<accession>Q5UPN2</accession>
<reference key="1">
    <citation type="journal article" date="2004" name="Science">
        <title>The 1.2-megabase genome sequence of Mimivirus.</title>
        <authorList>
            <person name="Raoult D."/>
            <person name="Audic S."/>
            <person name="Robert C."/>
            <person name="Abergel C."/>
            <person name="Renesto P."/>
            <person name="Ogata H."/>
            <person name="La Scola B."/>
            <person name="Susan M."/>
            <person name="Claverie J.-M."/>
        </authorList>
    </citation>
    <scope>NUCLEOTIDE SEQUENCE [LARGE SCALE GENOMIC DNA]</scope>
    <source>
        <strain>Rowbotham-Bradford</strain>
    </source>
</reference>
<evidence type="ECO:0000256" key="1">
    <source>
        <dbReference type="SAM" id="MobiDB-lite"/>
    </source>
</evidence>
<feature type="chain" id="PRO_0000253217" description="Putative F-box protein L168">
    <location>
        <begin position="1"/>
        <end position="204"/>
    </location>
</feature>
<feature type="domain" description="F-box">
    <location>
        <begin position="1"/>
        <end position="46"/>
    </location>
</feature>
<feature type="region of interest" description="Disordered" evidence="1">
    <location>
        <begin position="161"/>
        <end position="184"/>
    </location>
</feature>
<feature type="compositionally biased region" description="Basic residues" evidence="1">
    <location>
        <begin position="171"/>
        <end position="183"/>
    </location>
</feature>
<organismHost>
    <name type="scientific">Acanthamoeba polyphaga</name>
    <name type="common">Amoeba</name>
    <dbReference type="NCBI Taxonomy" id="5757"/>
</organismHost>
<proteinExistence type="predicted"/>
<sequence length="204" mass="24586">MNLCDLFDEIIIGIIDELSDRDKIKFMTTCSRFYYFIDKTKYFDIYDYNKISHLTFIEKIRNIKFYAVNDEIPSNTTHLILSDKYIGSLKNPLPNLKYIKLTNYQYLFLSKNILPHIEIDKNYKNPHIDSSRKEYFDETLIGLRPDCTFWRHNYNIKKSDNETNKITNNHTNKKINNNKKHQNNQKQIIQKNIKFPKILSKHKH</sequence>
<dbReference type="EMBL" id="AY653733">
    <property type="protein sequence ID" value="AAV50442.1"/>
    <property type="molecule type" value="Genomic_DNA"/>
</dbReference>
<dbReference type="KEGG" id="vg:9924768"/>
<dbReference type="Proteomes" id="UP000001134">
    <property type="component" value="Genome"/>
</dbReference>
<organism>
    <name type="scientific">Acanthamoeba polyphaga mimivirus</name>
    <name type="common">APMV</name>
    <dbReference type="NCBI Taxonomy" id="212035"/>
    <lineage>
        <taxon>Viruses</taxon>
        <taxon>Varidnaviria</taxon>
        <taxon>Bamfordvirae</taxon>
        <taxon>Nucleocytoviricota</taxon>
        <taxon>Megaviricetes</taxon>
        <taxon>Imitervirales</taxon>
        <taxon>Mimiviridae</taxon>
        <taxon>Megamimivirinae</taxon>
        <taxon>Mimivirus</taxon>
        <taxon>Mimivirus bradfordmassiliense</taxon>
    </lineage>
</organism>
<name>YL168_MIMIV</name>